<comment type="function">
    <text evidence="1">Specifically methylates the pseudouridine at position 1915 (m3Psi1915) in 23S rRNA.</text>
</comment>
<comment type="catalytic activity">
    <reaction evidence="1">
        <text>pseudouridine(1915) in 23S rRNA + S-adenosyl-L-methionine = N(3)-methylpseudouridine(1915) in 23S rRNA + S-adenosyl-L-homocysteine + H(+)</text>
        <dbReference type="Rhea" id="RHEA:42752"/>
        <dbReference type="Rhea" id="RHEA-COMP:10221"/>
        <dbReference type="Rhea" id="RHEA-COMP:10222"/>
        <dbReference type="ChEBI" id="CHEBI:15378"/>
        <dbReference type="ChEBI" id="CHEBI:57856"/>
        <dbReference type="ChEBI" id="CHEBI:59789"/>
        <dbReference type="ChEBI" id="CHEBI:65314"/>
        <dbReference type="ChEBI" id="CHEBI:74486"/>
        <dbReference type="EC" id="2.1.1.177"/>
    </reaction>
</comment>
<comment type="subunit">
    <text evidence="1">Homodimer.</text>
</comment>
<comment type="subcellular location">
    <subcellularLocation>
        <location evidence="1">Cytoplasm</location>
    </subcellularLocation>
</comment>
<comment type="similarity">
    <text evidence="1">Belongs to the RNA methyltransferase RlmH family.</text>
</comment>
<proteinExistence type="inferred from homology"/>
<evidence type="ECO:0000255" key="1">
    <source>
        <dbReference type="HAMAP-Rule" id="MF_00658"/>
    </source>
</evidence>
<gene>
    <name evidence="1" type="primary">rlmH</name>
    <name type="ordered locus">Z0782</name>
    <name type="ordered locus">ECs0674</name>
</gene>
<organism>
    <name type="scientific">Escherichia coli O157:H7</name>
    <dbReference type="NCBI Taxonomy" id="83334"/>
    <lineage>
        <taxon>Bacteria</taxon>
        <taxon>Pseudomonadati</taxon>
        <taxon>Pseudomonadota</taxon>
        <taxon>Gammaproteobacteria</taxon>
        <taxon>Enterobacterales</taxon>
        <taxon>Enterobacteriaceae</taxon>
        <taxon>Escherichia</taxon>
    </lineage>
</organism>
<protein>
    <recommendedName>
        <fullName evidence="1">Ribosomal RNA large subunit methyltransferase H</fullName>
        <ecNumber evidence="1">2.1.1.177</ecNumber>
    </recommendedName>
    <alternativeName>
        <fullName evidence="1">23S rRNA (pseudouridine1915-N3)-methyltransferase</fullName>
    </alternativeName>
    <alternativeName>
        <fullName evidence="1">23S rRNA m3Psi1915 methyltransferase</fullName>
    </alternativeName>
    <alternativeName>
        <fullName evidence="1">rRNA (pseudouridine-N3-)-methyltransferase RlmH</fullName>
    </alternativeName>
</protein>
<accession>P0A8J0</accession>
<accession>P05850</accession>
<name>RLMH_ECO57</name>
<keyword id="KW-0963">Cytoplasm</keyword>
<keyword id="KW-0489">Methyltransferase</keyword>
<keyword id="KW-1185">Reference proteome</keyword>
<keyword id="KW-0698">rRNA processing</keyword>
<keyword id="KW-0949">S-adenosyl-L-methionine</keyword>
<keyword id="KW-0808">Transferase</keyword>
<sequence>MKLQLVAVGTKMPDWVQTGFTEYLRRFPKDMPFELIEIPAGKRGKNADIKRILDKEGEQMLAAAGKNRIVTLDIPGKPWDTPQLAAELERWKLDGRDVSLLIGGPEGLSPACKAAAEQSWSLSALTLPHPLVRVLVAESLYRAWSITTNHPYHRE</sequence>
<dbReference type="EC" id="2.1.1.177" evidence="1"/>
<dbReference type="EMBL" id="AE005174">
    <property type="protein sequence ID" value="AAG54970.1"/>
    <property type="molecule type" value="Genomic_DNA"/>
</dbReference>
<dbReference type="EMBL" id="BA000007">
    <property type="protein sequence ID" value="BAB34097.1"/>
    <property type="molecule type" value="Genomic_DNA"/>
</dbReference>
<dbReference type="PIR" id="B90713">
    <property type="entry name" value="B90713"/>
</dbReference>
<dbReference type="PIR" id="F85563">
    <property type="entry name" value="F85563"/>
</dbReference>
<dbReference type="RefSeq" id="NP_308701.1">
    <property type="nucleotide sequence ID" value="NC_002695.1"/>
</dbReference>
<dbReference type="RefSeq" id="WP_000776104.1">
    <property type="nucleotide sequence ID" value="NZ_VOAI01000012.1"/>
</dbReference>
<dbReference type="SMR" id="P0A8J0"/>
<dbReference type="STRING" id="155864.Z0782"/>
<dbReference type="GeneID" id="917035"/>
<dbReference type="GeneID" id="93776846"/>
<dbReference type="KEGG" id="ece:Z0782"/>
<dbReference type="KEGG" id="ecs:ECs_0674"/>
<dbReference type="PATRIC" id="fig|386585.9.peg.786"/>
<dbReference type="eggNOG" id="COG1576">
    <property type="taxonomic scope" value="Bacteria"/>
</dbReference>
<dbReference type="HOGENOM" id="CLU_100552_1_0_6"/>
<dbReference type="OMA" id="NEPYHHQ"/>
<dbReference type="Proteomes" id="UP000000558">
    <property type="component" value="Chromosome"/>
</dbReference>
<dbReference type="Proteomes" id="UP000002519">
    <property type="component" value="Chromosome"/>
</dbReference>
<dbReference type="GO" id="GO:0005737">
    <property type="term" value="C:cytoplasm"/>
    <property type="evidence" value="ECO:0007669"/>
    <property type="project" value="UniProtKB-SubCell"/>
</dbReference>
<dbReference type="GO" id="GO:0070038">
    <property type="term" value="F:rRNA (pseudouridine-N3-)-methyltransferase activity"/>
    <property type="evidence" value="ECO:0007669"/>
    <property type="project" value="UniProtKB-UniRule"/>
</dbReference>
<dbReference type="CDD" id="cd18081">
    <property type="entry name" value="RlmH-like"/>
    <property type="match status" value="1"/>
</dbReference>
<dbReference type="FunFam" id="3.40.1280.10:FF:000004">
    <property type="entry name" value="Ribosomal RNA large subunit methyltransferase H"/>
    <property type="match status" value="1"/>
</dbReference>
<dbReference type="Gene3D" id="3.40.1280.10">
    <property type="match status" value="1"/>
</dbReference>
<dbReference type="HAMAP" id="MF_00658">
    <property type="entry name" value="23SrRNA_methyltr_H"/>
    <property type="match status" value="1"/>
</dbReference>
<dbReference type="InterPro" id="IPR029028">
    <property type="entry name" value="Alpha/beta_knot_MTases"/>
</dbReference>
<dbReference type="InterPro" id="IPR003742">
    <property type="entry name" value="RlmH-like"/>
</dbReference>
<dbReference type="InterPro" id="IPR029026">
    <property type="entry name" value="tRNA_m1G_MTases_N"/>
</dbReference>
<dbReference type="NCBIfam" id="NF000984">
    <property type="entry name" value="PRK00103.1-1"/>
    <property type="match status" value="1"/>
</dbReference>
<dbReference type="NCBIfam" id="NF000986">
    <property type="entry name" value="PRK00103.1-4"/>
    <property type="match status" value="1"/>
</dbReference>
<dbReference type="NCBIfam" id="TIGR00246">
    <property type="entry name" value="tRNA_RlmH_YbeA"/>
    <property type="match status" value="1"/>
</dbReference>
<dbReference type="PANTHER" id="PTHR33603">
    <property type="entry name" value="METHYLTRANSFERASE"/>
    <property type="match status" value="1"/>
</dbReference>
<dbReference type="PANTHER" id="PTHR33603:SF1">
    <property type="entry name" value="RIBOSOMAL RNA LARGE SUBUNIT METHYLTRANSFERASE H"/>
    <property type="match status" value="1"/>
</dbReference>
<dbReference type="Pfam" id="PF02590">
    <property type="entry name" value="SPOUT_MTase"/>
    <property type="match status" value="1"/>
</dbReference>
<dbReference type="PIRSF" id="PIRSF004505">
    <property type="entry name" value="MT_bac"/>
    <property type="match status" value="1"/>
</dbReference>
<dbReference type="SUPFAM" id="SSF75217">
    <property type="entry name" value="alpha/beta knot"/>
    <property type="match status" value="1"/>
</dbReference>
<reference key="1">
    <citation type="journal article" date="2001" name="Nature">
        <title>Genome sequence of enterohaemorrhagic Escherichia coli O157:H7.</title>
        <authorList>
            <person name="Perna N.T."/>
            <person name="Plunkett G. III"/>
            <person name="Burland V."/>
            <person name="Mau B."/>
            <person name="Glasner J.D."/>
            <person name="Rose D.J."/>
            <person name="Mayhew G.F."/>
            <person name="Evans P.S."/>
            <person name="Gregor J."/>
            <person name="Kirkpatrick H.A."/>
            <person name="Posfai G."/>
            <person name="Hackett J."/>
            <person name="Klink S."/>
            <person name="Boutin A."/>
            <person name="Shao Y."/>
            <person name="Miller L."/>
            <person name="Grotbeck E.J."/>
            <person name="Davis N.W."/>
            <person name="Lim A."/>
            <person name="Dimalanta E.T."/>
            <person name="Potamousis K."/>
            <person name="Apodaca J."/>
            <person name="Anantharaman T.S."/>
            <person name="Lin J."/>
            <person name="Yen G."/>
            <person name="Schwartz D.C."/>
            <person name="Welch R.A."/>
            <person name="Blattner F.R."/>
        </authorList>
    </citation>
    <scope>NUCLEOTIDE SEQUENCE [LARGE SCALE GENOMIC DNA]</scope>
    <source>
        <strain>O157:H7 / EDL933 / ATCC 700927 / EHEC</strain>
    </source>
</reference>
<reference key="2">
    <citation type="journal article" date="2001" name="DNA Res.">
        <title>Complete genome sequence of enterohemorrhagic Escherichia coli O157:H7 and genomic comparison with a laboratory strain K-12.</title>
        <authorList>
            <person name="Hayashi T."/>
            <person name="Makino K."/>
            <person name="Ohnishi M."/>
            <person name="Kurokawa K."/>
            <person name="Ishii K."/>
            <person name="Yokoyama K."/>
            <person name="Han C.-G."/>
            <person name="Ohtsubo E."/>
            <person name="Nakayama K."/>
            <person name="Murata T."/>
            <person name="Tanaka M."/>
            <person name="Tobe T."/>
            <person name="Iida T."/>
            <person name="Takami H."/>
            <person name="Honda T."/>
            <person name="Sasakawa C."/>
            <person name="Ogasawara N."/>
            <person name="Yasunaga T."/>
            <person name="Kuhara S."/>
            <person name="Shiba T."/>
            <person name="Hattori M."/>
            <person name="Shinagawa H."/>
        </authorList>
    </citation>
    <scope>NUCLEOTIDE SEQUENCE [LARGE SCALE GENOMIC DNA]</scope>
    <source>
        <strain>O157:H7 / Sakai / RIMD 0509952 / EHEC</strain>
    </source>
</reference>
<feature type="chain" id="PRO_0000198116" description="Ribosomal RNA large subunit methyltransferase H">
    <location>
        <begin position="1"/>
        <end position="155"/>
    </location>
</feature>
<feature type="binding site" evidence="1">
    <location>
        <position position="72"/>
    </location>
    <ligand>
        <name>S-adenosyl-L-methionine</name>
        <dbReference type="ChEBI" id="CHEBI:59789"/>
    </ligand>
</feature>
<feature type="binding site" evidence="1">
    <location>
        <position position="103"/>
    </location>
    <ligand>
        <name>S-adenosyl-L-methionine</name>
        <dbReference type="ChEBI" id="CHEBI:59789"/>
    </ligand>
</feature>
<feature type="binding site" evidence="1">
    <location>
        <begin position="122"/>
        <end position="127"/>
    </location>
    <ligand>
        <name>S-adenosyl-L-methionine</name>
        <dbReference type="ChEBI" id="CHEBI:59789"/>
    </ligand>
</feature>